<feature type="chain" id="PRO_0000456966" description="Desmoplakin-B">
    <location>
        <begin position="1"/>
        <end position="2207"/>
    </location>
</feature>
<feature type="repeat" description="Plectin 1" evidence="2">
    <location>
        <begin position="1369"/>
        <end position="1406"/>
    </location>
</feature>
<feature type="repeat" description="Plectin 2" evidence="2">
    <location>
        <begin position="1407"/>
        <end position="1445"/>
    </location>
</feature>
<feature type="repeat" description="Plectin 3" evidence="2">
    <location>
        <begin position="1446"/>
        <end position="1483"/>
    </location>
</feature>
<feature type="repeat" description="Plectin 4" evidence="2">
    <location>
        <begin position="1571"/>
        <end position="1609"/>
    </location>
</feature>
<feature type="repeat" description="Plectin 5" evidence="2">
    <location>
        <begin position="1610"/>
        <end position="1647"/>
    </location>
</feature>
<feature type="repeat" description="Plectin 6" evidence="2">
    <location>
        <begin position="1685"/>
        <end position="1723"/>
    </location>
</feature>
<feature type="repeat" description="Plectin 7" evidence="2">
    <location>
        <begin position="1783"/>
        <end position="1811"/>
    </location>
</feature>
<feature type="repeat" description="Plectin 8" evidence="2">
    <location>
        <begin position="1992"/>
        <end position="2029"/>
    </location>
</feature>
<feature type="repeat" description="Plectin 9" evidence="2">
    <location>
        <begin position="2068"/>
        <end position="2106"/>
    </location>
</feature>
<feature type="region of interest" description="Disordered" evidence="3">
    <location>
        <begin position="905"/>
        <end position="933"/>
    </location>
</feature>
<feature type="region of interest" description="Disordered" evidence="3">
    <location>
        <begin position="2155"/>
        <end position="2207"/>
    </location>
</feature>
<feature type="coiled-coil region" evidence="2">
    <location>
        <begin position="506"/>
        <end position="916"/>
    </location>
</feature>
<feature type="coiled-coil region" evidence="2">
    <location>
        <begin position="952"/>
        <end position="1000"/>
    </location>
</feature>
<feature type="coiled-coil region" evidence="2">
    <location>
        <begin position="1029"/>
        <end position="1063"/>
    </location>
</feature>
<feature type="compositionally biased region" description="Basic and acidic residues" evidence="3">
    <location>
        <begin position="905"/>
        <end position="924"/>
    </location>
</feature>
<feature type="compositionally biased region" description="Polar residues" evidence="3">
    <location>
        <begin position="2155"/>
        <end position="2164"/>
    </location>
</feature>
<feature type="compositionally biased region" description="Low complexity" evidence="3">
    <location>
        <begin position="2165"/>
        <end position="2207"/>
    </location>
</feature>
<comment type="function">
    <text evidence="4">Involved in the organization of desmosome cell-cell junctions (PubMed:29522173). Of particular importance in cell adhesion in the skin and during cardiac development (PubMed:29522173). May also play a role in the regulation of Wnt, TGF-beta and Hippo signaling pathways (PubMed:29522173).</text>
</comment>
<comment type="subcellular location">
    <subcellularLocation>
        <location evidence="1">Cell junction</location>
        <location evidence="1">Desmosome</location>
    </subcellularLocation>
    <subcellularLocation>
        <location evidence="1">Cell membrane</location>
    </subcellularLocation>
</comment>
<comment type="developmental stage">
    <text evidence="4">Expressed in the blastula and widely expressed in the gastrula from 3 hours post-fertilization (hpf) to 6 hpf (PubMed:29522173). Expressed in the epidermis from 16 hpf (PubMed:29522173). Expressed through the epidermis, lens, otic vesicle, pharynx, pectoral fin, and heart from 1 dpf to 5 dpf (PubMed:29522173).</text>
</comment>
<comment type="disruption phenotype">
    <text evidence="4">Morpholino knockdowns show no general morphological differences however do show a slight developmental delay (PubMed:29522173). Abnormal skin surface, reduced numbers of desmosome cell-cell junctions and disorganization of remaining desmosome at 2 dpf (PubMed:29522173). Cardiac regions show reduced desmosome numbers, detached cells and pericardial effusion (PubMed:29522173). A cardiac reduction in Wnt and TGF-beta signaling is also evident, with an increase in Hippo signaling (PubMed:29522173).</text>
</comment>
<comment type="similarity">
    <text evidence="5">Belongs to the plakin or cytolinker family.</text>
</comment>
<sequence>MDMQVPSVCLLVPPPNPLAISLASKNSQYYEAILSVWNQLYINVKSMISWQYCLLDIGRINSLTMSMLSKMGPDESNNILRSLEMHFQEFKRHSQGSELFGAEDQKLIENQFAGAQQHFDKLVVDLPTYAARGEGSEYSAAVSVKMLNELNALRLKLDGAESSLISFLYIALGDDGLEECGQHISSTQAFQKNIQGLRGEFVSLRDGIQAELKDAGNSDKGRYLSGQLDIMNQRLLNLDNYFTTHLQRLDSVKSLLKDMMKAEDVVKVYEARLTEKETASSDPEEVQRYQKVLLSMRSDLEQKQDLLNSLVVDLNQMQKVNDQRDQGRYQCIINLTQYADHVHQLSDRWKRIHVQINNRLVDLDSYLPQLKRYMQSSSQLSGWIDETQKQIDSQHSVKMEDSAAYTQLLNQQKALNSDIKAKRELMETVHKDGETCISAIKNYELELATYSAGLETLLNIPIKRTVLQSPSSSIAEEVSSLNAHYLELLTRSSDYYKLLLASQKNMEELKIRNTRIELLEEELEQLRDAIKDQTANNASLQDALLQYQQELNNSQSHLLSLEEVKRTETMKCMATQESLDSSKDRLEELTEEVRRLKLQLEDMERKKKIVEERYTFLQEEHDETMRKKLKELEQASWAKMELEKTVSERNRELERLRKELEDEARRIKEAQTELAKVRQEHSTEIREVKQTYESQILVAQSSMQKLSQEKESDSAAMSLEFERLEGESSELKEQLKRLRISLSQEEAQRRILEEEVKRLTALNTEESRKRHELESQIQVMMSQKREGDNKMREVQESSSRTLQDKINEINRLTRNFEEERRLKRSLETDKRRLEGDLAVLKSKNETTNEELVQLRSSHRELSLIRVELEAHALEKGRSEQTIARLQARIQELQEELKRLEGELEKQRQVAEEEAGKRRRTESQLEKSSQAMREYTTTITTLRTSQEETNIGAKHADEKCKQLQEALDRASKENKVTSQNLAALKAEINTLKLQLTQEQGRVQDSNQRYEALHRSMEEKSCALNVSSGETERLQRLTETLTKDRQRVEEELRAVRLEHEELLKNKKRGDREMTEQITALQKQLDSSQRAGAEHDRLMRQLSREREKLQVEIENVQKQARETSSVIQTSQSQCSSLSQERDDLLKKITTMEQEIVRLKRLEDELARIKLSLESELRFKSQLQEENNKIKKDFTQWKTKCASHEEQLRQHASERSGLESQFSSVRTELERLRTQLREAEERYRLLLQNFEQERTEMQALRDSKQELLRLQQKPDGATKYTQTDQTDPSSLVFEGVRKNITAQQLQDCGVIDKVIFEQLMTGKRTVQDVSVDIRLNLKGTGAIAGLAAGPKGKMTFTEAKKQNLISDKSGNMLLEAQAATGYIIDPQANTKMTVEEACLNGVVDEADKKQLLIAEAACVGFRDPKTAKLLPVSQAMKKGIIDRETTLRLLQAQEAAGGILDPILSVYLPKDTAMDRDLVDEDLYQALNAKPDCYIDPDTDLRASYVTLKKQCKADLNTGLLLLPAPEKPITVQGLRSEVNVSDLVDAKLLEPSDMNHLREGKITSQEIEHRLRAYLRGSTCIAGIYDEAGECTLPIYQAMKNGLLRPGTTLELLEAQAASGFVIDPINNEYYTVEEACQKGLVGVEFKDKLLSAEKAVTGYKEPGTNKLISLFEAIERGLIEKGHGIRLLEAQIASGGIIDPKHSHRIDVDVAYQRGYFDQGMNQILKDEGDDTKGFFDPNTEDNLTYLELKSRCTIDKKTGLVLLPIHDKKKAQQKNSTRKRRVLIVDPDSNKEMTVREAYEKKLIDYETFLELSQQECEWEETTITAPDGSTSTAIMDMQTGIQYNLKELLAQGVIDQDVFNKYRSGGISVTELAGMITKKTKMLTNPVSSSSSSSLSSSSSSFTSQTTTKSQIVKTETIKSIESTSEYLQQDQSSANSSKHISSMSVKLSPLVESIEEQNPVGAIFDTEKLEKITVCDALKRGMIDSITAQRLLEAQACTGGIVSPDNGRRMSIQEATRVGVLDDEMANRIKPAQKAYIGFEDVKTKRKMSAAEAVKEKWLPYEAGQRFLEFQYLTGGLFDPELGCRRSLEEALQMGWLDMRAAQRLQDTRHHPKTLTCPKTKLRISYKEAMEACMNEENTGVRMLPAATVSSRGISSPYNLSNPGSASGSRSGSRRGSVDYSLSPSSSSRYSSFSYSRTSFSSRSLS</sequence>
<gene>
    <name evidence="7" type="primary">dspb</name>
</gene>
<evidence type="ECO:0000250" key="1">
    <source>
        <dbReference type="UniProtKB" id="E9Q557"/>
    </source>
</evidence>
<evidence type="ECO:0000255" key="2"/>
<evidence type="ECO:0000256" key="3">
    <source>
        <dbReference type="SAM" id="MobiDB-lite"/>
    </source>
</evidence>
<evidence type="ECO:0000269" key="4">
    <source>
    </source>
</evidence>
<evidence type="ECO:0000305" key="5"/>
<evidence type="ECO:0000312" key="6">
    <source>
        <dbReference type="Proteomes" id="UP000000437"/>
    </source>
</evidence>
<evidence type="ECO:0000312" key="7">
    <source>
        <dbReference type="ZFIN" id="ZDB-GENE-030131-1662"/>
    </source>
</evidence>
<name>DESPB_DANRE</name>
<proteinExistence type="evidence at transcript level"/>
<organism evidence="6">
    <name type="scientific">Danio rerio</name>
    <name type="common">Zebrafish</name>
    <name type="synonym">Brachydanio rerio</name>
    <dbReference type="NCBI Taxonomy" id="7955"/>
    <lineage>
        <taxon>Eukaryota</taxon>
        <taxon>Metazoa</taxon>
        <taxon>Chordata</taxon>
        <taxon>Craniata</taxon>
        <taxon>Vertebrata</taxon>
        <taxon>Euteleostomi</taxon>
        <taxon>Actinopterygii</taxon>
        <taxon>Neopterygii</taxon>
        <taxon>Teleostei</taxon>
        <taxon>Ostariophysi</taxon>
        <taxon>Cypriniformes</taxon>
        <taxon>Danionidae</taxon>
        <taxon>Danioninae</taxon>
        <taxon>Danio</taxon>
    </lineage>
</organism>
<reference evidence="6" key="1">
    <citation type="journal article" date="2013" name="Nature">
        <title>The zebrafish reference genome sequence and its relationship to the human genome.</title>
        <authorList>
            <person name="Howe K."/>
            <person name="Clark M.D."/>
            <person name="Torroja C.F."/>
            <person name="Torrance J."/>
            <person name="Berthelot C."/>
            <person name="Muffato M."/>
            <person name="Collins J.E."/>
            <person name="Humphray S."/>
            <person name="McLaren K."/>
            <person name="Matthews L."/>
            <person name="McLaren S."/>
            <person name="Sealy I."/>
            <person name="Caccamo M."/>
            <person name="Churcher C."/>
            <person name="Scott C."/>
            <person name="Barrett J.C."/>
            <person name="Koch R."/>
            <person name="Rauch G.J."/>
            <person name="White S."/>
            <person name="Chow W."/>
            <person name="Kilian B."/>
            <person name="Quintais L.T."/>
            <person name="Guerra-Assuncao J.A."/>
            <person name="Zhou Y."/>
            <person name="Gu Y."/>
            <person name="Yen J."/>
            <person name="Vogel J.H."/>
            <person name="Eyre T."/>
            <person name="Redmond S."/>
            <person name="Banerjee R."/>
            <person name="Chi J."/>
            <person name="Fu B."/>
            <person name="Langley E."/>
            <person name="Maguire S.F."/>
            <person name="Laird G.K."/>
            <person name="Lloyd D."/>
            <person name="Kenyon E."/>
            <person name="Donaldson S."/>
            <person name="Sehra H."/>
            <person name="Almeida-King J."/>
            <person name="Loveland J."/>
            <person name="Trevanion S."/>
            <person name="Jones M."/>
            <person name="Quail M."/>
            <person name="Willey D."/>
            <person name="Hunt A."/>
            <person name="Burton J."/>
            <person name="Sims S."/>
            <person name="McLay K."/>
            <person name="Plumb B."/>
            <person name="Davis J."/>
            <person name="Clee C."/>
            <person name="Oliver K."/>
            <person name="Clark R."/>
            <person name="Riddle C."/>
            <person name="Elliot D."/>
            <person name="Threadgold G."/>
            <person name="Harden G."/>
            <person name="Ware D."/>
            <person name="Begum S."/>
            <person name="Mortimore B."/>
            <person name="Kerry G."/>
            <person name="Heath P."/>
            <person name="Phillimore B."/>
            <person name="Tracey A."/>
            <person name="Corby N."/>
            <person name="Dunn M."/>
            <person name="Johnson C."/>
            <person name="Wood J."/>
            <person name="Clark S."/>
            <person name="Pelan S."/>
            <person name="Griffiths G."/>
            <person name="Smith M."/>
            <person name="Glithero R."/>
            <person name="Howden P."/>
            <person name="Barker N."/>
            <person name="Lloyd C."/>
            <person name="Stevens C."/>
            <person name="Harley J."/>
            <person name="Holt K."/>
            <person name="Panagiotidis G."/>
            <person name="Lovell J."/>
            <person name="Beasley H."/>
            <person name="Henderson C."/>
            <person name="Gordon D."/>
            <person name="Auger K."/>
            <person name="Wright D."/>
            <person name="Collins J."/>
            <person name="Raisen C."/>
            <person name="Dyer L."/>
            <person name="Leung K."/>
            <person name="Robertson L."/>
            <person name="Ambridge K."/>
            <person name="Leongamornlert D."/>
            <person name="McGuire S."/>
            <person name="Gilderthorp R."/>
            <person name="Griffiths C."/>
            <person name="Manthravadi D."/>
            <person name="Nichol S."/>
            <person name="Barker G."/>
            <person name="Whitehead S."/>
            <person name="Kay M."/>
            <person name="Brown J."/>
            <person name="Murnane C."/>
            <person name="Gray E."/>
            <person name="Humphries M."/>
            <person name="Sycamore N."/>
            <person name="Barker D."/>
            <person name="Saunders D."/>
            <person name="Wallis J."/>
            <person name="Babbage A."/>
            <person name="Hammond S."/>
            <person name="Mashreghi-Mohammadi M."/>
            <person name="Barr L."/>
            <person name="Martin S."/>
            <person name="Wray P."/>
            <person name="Ellington A."/>
            <person name="Matthews N."/>
            <person name="Ellwood M."/>
            <person name="Woodmansey R."/>
            <person name="Clark G."/>
            <person name="Cooper J."/>
            <person name="Tromans A."/>
            <person name="Grafham D."/>
            <person name="Skuce C."/>
            <person name="Pandian R."/>
            <person name="Andrews R."/>
            <person name="Harrison E."/>
            <person name="Kimberley A."/>
            <person name="Garnett J."/>
            <person name="Fosker N."/>
            <person name="Hall R."/>
            <person name="Garner P."/>
            <person name="Kelly D."/>
            <person name="Bird C."/>
            <person name="Palmer S."/>
            <person name="Gehring I."/>
            <person name="Berger A."/>
            <person name="Dooley C.M."/>
            <person name="Ersan-Urun Z."/>
            <person name="Eser C."/>
            <person name="Geiger H."/>
            <person name="Geisler M."/>
            <person name="Karotki L."/>
            <person name="Kirn A."/>
            <person name="Konantz J."/>
            <person name="Konantz M."/>
            <person name="Oberlander M."/>
            <person name="Rudolph-Geiger S."/>
            <person name="Teucke M."/>
            <person name="Lanz C."/>
            <person name="Raddatz G."/>
            <person name="Osoegawa K."/>
            <person name="Zhu B."/>
            <person name="Rapp A."/>
            <person name="Widaa S."/>
            <person name="Langford C."/>
            <person name="Yang F."/>
            <person name="Schuster S.C."/>
            <person name="Carter N.P."/>
            <person name="Harrow J."/>
            <person name="Ning Z."/>
            <person name="Herrero J."/>
            <person name="Searle S.M."/>
            <person name="Enright A."/>
            <person name="Geisler R."/>
            <person name="Plasterk R.H."/>
            <person name="Lee C."/>
            <person name="Westerfield M."/>
            <person name="de Jong P.J."/>
            <person name="Zon L.I."/>
            <person name="Postlethwait J.H."/>
            <person name="Nusslein-Volhard C."/>
            <person name="Hubbard T.J."/>
            <person name="Roest Crollius H."/>
            <person name="Rogers J."/>
            <person name="Stemple D.L."/>
        </authorList>
    </citation>
    <scope>NUCLEOTIDE SEQUENCE [LARGE SCALE GENOMIC DNA]</scope>
    <source>
        <strain evidence="6">Tuebingen</strain>
    </source>
</reference>
<reference evidence="5" key="2">
    <citation type="journal article" date="2018" name="Cardiovasc. Res.">
        <title>Loss of cardiac Wnt/beta-catenin signalling in desmoplakin-deficient AC8 zebrafish models is rescuable by genetic and pharmacological intervention.</title>
        <authorList>
            <person name="Giuliodori A."/>
            <person name="Beffagna G."/>
            <person name="Marchetto G."/>
            <person name="Fornetto C."/>
            <person name="Vanzi F."/>
            <person name="Toppo S."/>
            <person name="Facchinello N."/>
            <person name="Santimaria M."/>
            <person name="Vettori A."/>
            <person name="Rizzo S."/>
            <person name="Della Barbera M."/>
            <person name="Pilichou K."/>
            <person name="Argenton F."/>
            <person name="Thiene G."/>
            <person name="Tiso N."/>
            <person name="Basso C."/>
        </authorList>
    </citation>
    <scope>FUNCTION</scope>
    <scope>DEVELOPMENTAL STAGE</scope>
    <scope>DISRUPTION PHENOTYPE</scope>
</reference>
<keyword id="KW-0965">Cell junction</keyword>
<keyword id="KW-1003">Cell membrane</keyword>
<keyword id="KW-0175">Coiled coil</keyword>
<keyword id="KW-0472">Membrane</keyword>
<keyword id="KW-0597">Phosphoprotein</keyword>
<keyword id="KW-1185">Reference proteome</keyword>
<keyword id="KW-0677">Repeat</keyword>
<dbReference type="EMBL" id="CABZ01076174">
    <property type="status" value="NOT_ANNOTATED_CDS"/>
    <property type="molecule type" value="Genomic_DNA"/>
</dbReference>
<dbReference type="EMBL" id="CABZ01076175">
    <property type="status" value="NOT_ANNOTATED_CDS"/>
    <property type="molecule type" value="Genomic_DNA"/>
</dbReference>
<dbReference type="EMBL" id="FO704920">
    <property type="status" value="NOT_ANNOTATED_CDS"/>
    <property type="molecule type" value="Genomic_DNA"/>
</dbReference>
<dbReference type="RefSeq" id="NP_001410356.1">
    <property type="nucleotide sequence ID" value="NM_001423427.1"/>
</dbReference>
<dbReference type="SMR" id="A0A8M9PQ61"/>
<dbReference type="STRING" id="7955.ENSDARP00000103914"/>
<dbReference type="Ensembl" id="ENSDART00000111078">
    <property type="protein sequence ID" value="ENSDARP00000103914"/>
    <property type="gene ID" value="ENSDARG00000076673"/>
</dbReference>
<dbReference type="GeneID" id="327364"/>
<dbReference type="AGR" id="ZFIN:ZDB-GENE-030131-1662"/>
<dbReference type="ZFIN" id="ZDB-GENE-030131-1662">
    <property type="gene designation" value="dspb"/>
</dbReference>
<dbReference type="eggNOG" id="KOG0516">
    <property type="taxonomic scope" value="Eukaryota"/>
</dbReference>
<dbReference type="HOGENOM" id="CLU_000679_1_0_1"/>
<dbReference type="OMA" id="RKTGLQY"/>
<dbReference type="OrthoDB" id="8938928at2759"/>
<dbReference type="TreeFam" id="TF106435"/>
<dbReference type="PRO" id="PR:A0A8M9PQ61"/>
<dbReference type="Proteomes" id="UP000000437">
    <property type="component" value="Chromosome 20"/>
</dbReference>
<dbReference type="Bgee" id="ENSDARG00000076673">
    <property type="expression patterns" value="Expressed in zone of skin and 29 other cell types or tissues"/>
</dbReference>
<dbReference type="GO" id="GO:0005856">
    <property type="term" value="C:cytoskeleton"/>
    <property type="evidence" value="ECO:0007669"/>
    <property type="project" value="InterPro"/>
</dbReference>
<dbReference type="GO" id="GO:0030057">
    <property type="term" value="C:desmosome"/>
    <property type="evidence" value="ECO:0007669"/>
    <property type="project" value="UniProtKB-SubCell"/>
</dbReference>
<dbReference type="GO" id="GO:0014704">
    <property type="term" value="C:intercalated disc"/>
    <property type="evidence" value="ECO:0000318"/>
    <property type="project" value="GO_Central"/>
</dbReference>
<dbReference type="GO" id="GO:0005886">
    <property type="term" value="C:plasma membrane"/>
    <property type="evidence" value="ECO:0000318"/>
    <property type="project" value="GO_Central"/>
</dbReference>
<dbReference type="GO" id="GO:0005198">
    <property type="term" value="F:structural molecule activity"/>
    <property type="evidence" value="ECO:0000318"/>
    <property type="project" value="GO_Central"/>
</dbReference>
<dbReference type="GO" id="GO:0098609">
    <property type="term" value="P:cell-cell adhesion"/>
    <property type="evidence" value="ECO:0000318"/>
    <property type="project" value="GO_Central"/>
</dbReference>
<dbReference type="GO" id="GO:0002934">
    <property type="term" value="P:desmosome organization"/>
    <property type="evidence" value="ECO:0000315"/>
    <property type="project" value="UniProtKB"/>
</dbReference>
<dbReference type="GO" id="GO:0061436">
    <property type="term" value="P:establishment of skin barrier"/>
    <property type="evidence" value="ECO:0000315"/>
    <property type="project" value="UniProtKB"/>
</dbReference>
<dbReference type="GO" id="GO:0031101">
    <property type="term" value="P:fin regeneration"/>
    <property type="evidence" value="ECO:0000316"/>
    <property type="project" value="ZFIN"/>
</dbReference>
<dbReference type="GO" id="GO:0060047">
    <property type="term" value="P:heart contraction"/>
    <property type="evidence" value="ECO:0000316"/>
    <property type="project" value="ZFIN"/>
</dbReference>
<dbReference type="GO" id="GO:0007507">
    <property type="term" value="P:heart development"/>
    <property type="evidence" value="ECO:0000315"/>
    <property type="project" value="UniProtKB"/>
</dbReference>
<dbReference type="GO" id="GO:0045104">
    <property type="term" value="P:intermediate filament cytoskeleton organization"/>
    <property type="evidence" value="ECO:0000318"/>
    <property type="project" value="GO_Central"/>
</dbReference>
<dbReference type="GO" id="GO:0043588">
    <property type="term" value="P:skin development"/>
    <property type="evidence" value="ECO:0000318"/>
    <property type="project" value="GO_Central"/>
</dbReference>
<dbReference type="GO" id="GO:0042060">
    <property type="term" value="P:wound healing"/>
    <property type="evidence" value="ECO:0000318"/>
    <property type="project" value="GO_Central"/>
</dbReference>
<dbReference type="FunFam" id="3.30.160.780:FF:000001">
    <property type="entry name" value="Plectin a"/>
    <property type="match status" value="1"/>
</dbReference>
<dbReference type="FunFam" id="3.90.1290.10:FF:000001">
    <property type="entry name" value="Plectin a"/>
    <property type="match status" value="2"/>
</dbReference>
<dbReference type="FunFam" id="3.90.1290.10:FF:000002">
    <property type="entry name" value="Plectin a"/>
    <property type="match status" value="1"/>
</dbReference>
<dbReference type="FunFam" id="1.20.58.60:FF:000010">
    <property type="entry name" value="plectin isoform X2"/>
    <property type="match status" value="1"/>
</dbReference>
<dbReference type="Gene3D" id="1.20.58.1060">
    <property type="match status" value="1"/>
</dbReference>
<dbReference type="Gene3D" id="1.20.58.60">
    <property type="match status" value="2"/>
</dbReference>
<dbReference type="Gene3D" id="3.30.160.780">
    <property type="match status" value="1"/>
</dbReference>
<dbReference type="Gene3D" id="3.90.1290.10">
    <property type="entry name" value="Plakin repeat"/>
    <property type="match status" value="3"/>
</dbReference>
<dbReference type="Gene3D" id="2.30.30.40">
    <property type="entry name" value="SH3 Domains"/>
    <property type="match status" value="1"/>
</dbReference>
<dbReference type="InterPro" id="IPR041573">
    <property type="entry name" value="Desmoplakin_Spectrin-like"/>
</dbReference>
<dbReference type="InterPro" id="IPR043197">
    <property type="entry name" value="Plakin"/>
</dbReference>
<dbReference type="InterPro" id="IPR035915">
    <property type="entry name" value="Plakin_repeat_sf"/>
</dbReference>
<dbReference type="InterPro" id="IPR001101">
    <property type="entry name" value="Plectin_repeat"/>
</dbReference>
<dbReference type="PANTHER" id="PTHR23169:SF26">
    <property type="entry name" value="DESMOPLAKIN"/>
    <property type="match status" value="1"/>
</dbReference>
<dbReference type="PANTHER" id="PTHR23169">
    <property type="entry name" value="ENVOPLAKIN"/>
    <property type="match status" value="1"/>
</dbReference>
<dbReference type="Pfam" id="PF00681">
    <property type="entry name" value="Plectin"/>
    <property type="match status" value="8"/>
</dbReference>
<dbReference type="Pfam" id="PF18373">
    <property type="entry name" value="Spectrin_2"/>
    <property type="match status" value="1"/>
</dbReference>
<dbReference type="Pfam" id="PF21097">
    <property type="entry name" value="SR_plectin_7"/>
    <property type="match status" value="1"/>
</dbReference>
<dbReference type="SMART" id="SM00250">
    <property type="entry name" value="PLEC"/>
    <property type="match status" value="16"/>
</dbReference>
<dbReference type="SUPFAM" id="SSF75399">
    <property type="entry name" value="Plakin repeat"/>
    <property type="match status" value="4"/>
</dbReference>
<dbReference type="SUPFAM" id="SSF46966">
    <property type="entry name" value="Spectrin repeat"/>
    <property type="match status" value="1"/>
</dbReference>
<dbReference type="PROSITE" id="PS00815">
    <property type="entry name" value="AIPM_HOMOCIT_SYNTH_1"/>
    <property type="match status" value="1"/>
</dbReference>
<dbReference type="PROSITE" id="PS00018">
    <property type="entry name" value="EF_HAND_1"/>
    <property type="match status" value="1"/>
</dbReference>
<accession>A0A8M9PQ61</accession>
<accession>F1QAU9</accession>
<protein>
    <recommendedName>
        <fullName evidence="5">Desmoplakin-B</fullName>
    </recommendedName>
    <alternativeName>
        <fullName>Desmoplakin isoform X1</fullName>
    </alternativeName>
</protein>